<reference key="1">
    <citation type="journal article" date="2009" name="Genome Res.">
        <title>Complete genome of the cellulolytic thermophile Acidothermus cellulolyticus 11B provides insights into its ecophysiological and evolutionary adaptations.</title>
        <authorList>
            <person name="Barabote R.D."/>
            <person name="Xie G."/>
            <person name="Leu D.H."/>
            <person name="Normand P."/>
            <person name="Necsulea A."/>
            <person name="Daubin V."/>
            <person name="Medigue C."/>
            <person name="Adney W.S."/>
            <person name="Xu X.C."/>
            <person name="Lapidus A."/>
            <person name="Parales R.E."/>
            <person name="Detter C."/>
            <person name="Pujic P."/>
            <person name="Bruce D."/>
            <person name="Lavire C."/>
            <person name="Challacombe J.F."/>
            <person name="Brettin T.S."/>
            <person name="Berry A.M."/>
        </authorList>
    </citation>
    <scope>NUCLEOTIDE SEQUENCE [LARGE SCALE GENOMIC DNA]</scope>
    <source>
        <strain>ATCC 43068 / DSM 8971 / 11B</strain>
    </source>
</reference>
<keyword id="KW-0028">Amino-acid biosynthesis</keyword>
<keyword id="KW-0057">Aromatic amino acid biosynthesis</keyword>
<keyword id="KW-0274">FAD</keyword>
<keyword id="KW-0285">Flavoprotein</keyword>
<keyword id="KW-0288">FMN</keyword>
<keyword id="KW-0456">Lyase</keyword>
<keyword id="KW-0521">NADP</keyword>
<keyword id="KW-1185">Reference proteome</keyword>
<feature type="chain" id="PRO_0000322380" description="Chorismate synthase">
    <location>
        <begin position="1"/>
        <end position="392"/>
    </location>
</feature>
<feature type="binding site" evidence="1">
    <location>
        <position position="40"/>
    </location>
    <ligand>
        <name>NADP(+)</name>
        <dbReference type="ChEBI" id="CHEBI:58349"/>
    </ligand>
</feature>
<feature type="binding site" evidence="1">
    <location>
        <position position="46"/>
    </location>
    <ligand>
        <name>NADP(+)</name>
        <dbReference type="ChEBI" id="CHEBI:58349"/>
    </ligand>
</feature>
<feature type="binding site" evidence="1">
    <location>
        <begin position="135"/>
        <end position="137"/>
    </location>
    <ligand>
        <name>FMN</name>
        <dbReference type="ChEBI" id="CHEBI:58210"/>
    </ligand>
</feature>
<feature type="binding site" evidence="1">
    <location>
        <begin position="256"/>
        <end position="257"/>
    </location>
    <ligand>
        <name>FMN</name>
        <dbReference type="ChEBI" id="CHEBI:58210"/>
    </ligand>
</feature>
<feature type="binding site" evidence="1">
    <location>
        <position position="300"/>
    </location>
    <ligand>
        <name>FMN</name>
        <dbReference type="ChEBI" id="CHEBI:58210"/>
    </ligand>
</feature>
<feature type="binding site" evidence="1">
    <location>
        <begin position="315"/>
        <end position="319"/>
    </location>
    <ligand>
        <name>FMN</name>
        <dbReference type="ChEBI" id="CHEBI:58210"/>
    </ligand>
</feature>
<feature type="binding site" evidence="1">
    <location>
        <position position="341"/>
    </location>
    <ligand>
        <name>FMN</name>
        <dbReference type="ChEBI" id="CHEBI:58210"/>
    </ligand>
</feature>
<organism>
    <name type="scientific">Acidothermus cellulolyticus (strain ATCC 43068 / DSM 8971 / 11B)</name>
    <dbReference type="NCBI Taxonomy" id="351607"/>
    <lineage>
        <taxon>Bacteria</taxon>
        <taxon>Bacillati</taxon>
        <taxon>Actinomycetota</taxon>
        <taxon>Actinomycetes</taxon>
        <taxon>Acidothermales</taxon>
        <taxon>Acidothermaceae</taxon>
        <taxon>Acidothermus</taxon>
    </lineage>
</organism>
<sequence>MLRWLTAGESHGPALVAVLEGLPAGVEITTSVLGDALARRRMGYGRGARMTFERDEVEFLGGIRHGVTMGGPVAIRIANTEWPKWREVMAADPVPPEQLADLARAAPLTRPRPGHADLVGMQKYHLTDIRPILERASARETAARVALGTVAAAFLRQAAGIEVLSHVVAIGPVCAPAEPLPTPADRERIDADPVRCLDPQASAAMVAEIDAAKKDGDTLGGVVEVLGYGLPPGLGSHVHWDRRLDARLAAALMSIQAIKGVEVGDGFATARRRGSAAHDEIEAGADGVRRRTNRSGGTEGGMSTGEVLRVRAAMKPISTVPRALDTIDVTTGEPAKAINQRSDVCAVPAAGVVAEAMVELVLADALLEKFGGDHVVETRRNLQAYLDTLVVR</sequence>
<name>AROC_ACIC1</name>
<evidence type="ECO:0000255" key="1">
    <source>
        <dbReference type="HAMAP-Rule" id="MF_00300"/>
    </source>
</evidence>
<evidence type="ECO:0000305" key="2"/>
<proteinExistence type="inferred from homology"/>
<gene>
    <name evidence="1" type="primary">aroC</name>
    <name type="ordered locus">Acel_1309</name>
</gene>
<protein>
    <recommendedName>
        <fullName evidence="1">Chorismate synthase</fullName>
        <shortName evidence="1">CS</shortName>
        <ecNumber evidence="1">4.2.3.5</ecNumber>
    </recommendedName>
    <alternativeName>
        <fullName evidence="1">5-enolpyruvylshikimate-3-phosphate phospholyase</fullName>
    </alternativeName>
</protein>
<dbReference type="EC" id="4.2.3.5" evidence="1"/>
<dbReference type="EMBL" id="CP000481">
    <property type="protein sequence ID" value="ABK53081.1"/>
    <property type="status" value="ALT_INIT"/>
    <property type="molecule type" value="Genomic_DNA"/>
</dbReference>
<dbReference type="RefSeq" id="WP_041834988.1">
    <property type="nucleotide sequence ID" value="NC_008578.1"/>
</dbReference>
<dbReference type="SMR" id="A0LUH1"/>
<dbReference type="FunCoup" id="A0LUH1">
    <property type="interactions" value="280"/>
</dbReference>
<dbReference type="STRING" id="351607.Acel_1309"/>
<dbReference type="KEGG" id="ace:Acel_1309"/>
<dbReference type="eggNOG" id="COG0082">
    <property type="taxonomic scope" value="Bacteria"/>
</dbReference>
<dbReference type="HOGENOM" id="CLU_034547_2_0_11"/>
<dbReference type="InParanoid" id="A0LUH1"/>
<dbReference type="OrthoDB" id="9771806at2"/>
<dbReference type="UniPathway" id="UPA00053">
    <property type="reaction ID" value="UER00090"/>
</dbReference>
<dbReference type="Proteomes" id="UP000008221">
    <property type="component" value="Chromosome"/>
</dbReference>
<dbReference type="GO" id="GO:0005829">
    <property type="term" value="C:cytosol"/>
    <property type="evidence" value="ECO:0007669"/>
    <property type="project" value="TreeGrafter"/>
</dbReference>
<dbReference type="GO" id="GO:0004107">
    <property type="term" value="F:chorismate synthase activity"/>
    <property type="evidence" value="ECO:0007669"/>
    <property type="project" value="UniProtKB-UniRule"/>
</dbReference>
<dbReference type="GO" id="GO:0010181">
    <property type="term" value="F:FMN binding"/>
    <property type="evidence" value="ECO:0007669"/>
    <property type="project" value="TreeGrafter"/>
</dbReference>
<dbReference type="GO" id="GO:0008652">
    <property type="term" value="P:amino acid biosynthetic process"/>
    <property type="evidence" value="ECO:0007669"/>
    <property type="project" value="UniProtKB-KW"/>
</dbReference>
<dbReference type="GO" id="GO:0009073">
    <property type="term" value="P:aromatic amino acid family biosynthetic process"/>
    <property type="evidence" value="ECO:0007669"/>
    <property type="project" value="UniProtKB-KW"/>
</dbReference>
<dbReference type="GO" id="GO:0009423">
    <property type="term" value="P:chorismate biosynthetic process"/>
    <property type="evidence" value="ECO:0007669"/>
    <property type="project" value="UniProtKB-UniRule"/>
</dbReference>
<dbReference type="CDD" id="cd07304">
    <property type="entry name" value="Chorismate_synthase"/>
    <property type="match status" value="1"/>
</dbReference>
<dbReference type="FunFam" id="3.60.150.10:FF:000002">
    <property type="entry name" value="Chorismate synthase"/>
    <property type="match status" value="1"/>
</dbReference>
<dbReference type="Gene3D" id="3.60.150.10">
    <property type="entry name" value="Chorismate synthase AroC"/>
    <property type="match status" value="1"/>
</dbReference>
<dbReference type="HAMAP" id="MF_00300">
    <property type="entry name" value="Chorismate_synth"/>
    <property type="match status" value="1"/>
</dbReference>
<dbReference type="InterPro" id="IPR000453">
    <property type="entry name" value="Chorismate_synth"/>
</dbReference>
<dbReference type="InterPro" id="IPR035904">
    <property type="entry name" value="Chorismate_synth_AroC_sf"/>
</dbReference>
<dbReference type="InterPro" id="IPR020541">
    <property type="entry name" value="Chorismate_synthase_CS"/>
</dbReference>
<dbReference type="NCBIfam" id="TIGR00033">
    <property type="entry name" value="aroC"/>
    <property type="match status" value="1"/>
</dbReference>
<dbReference type="NCBIfam" id="NF003793">
    <property type="entry name" value="PRK05382.1"/>
    <property type="match status" value="1"/>
</dbReference>
<dbReference type="PANTHER" id="PTHR21085">
    <property type="entry name" value="CHORISMATE SYNTHASE"/>
    <property type="match status" value="1"/>
</dbReference>
<dbReference type="PANTHER" id="PTHR21085:SF0">
    <property type="entry name" value="CHORISMATE SYNTHASE"/>
    <property type="match status" value="1"/>
</dbReference>
<dbReference type="Pfam" id="PF01264">
    <property type="entry name" value="Chorismate_synt"/>
    <property type="match status" value="1"/>
</dbReference>
<dbReference type="PIRSF" id="PIRSF001456">
    <property type="entry name" value="Chorismate_synth"/>
    <property type="match status" value="1"/>
</dbReference>
<dbReference type="SUPFAM" id="SSF103263">
    <property type="entry name" value="Chorismate synthase, AroC"/>
    <property type="match status" value="1"/>
</dbReference>
<dbReference type="PROSITE" id="PS00787">
    <property type="entry name" value="CHORISMATE_SYNTHASE_1"/>
    <property type="match status" value="1"/>
</dbReference>
<dbReference type="PROSITE" id="PS00788">
    <property type="entry name" value="CHORISMATE_SYNTHASE_2"/>
    <property type="match status" value="1"/>
</dbReference>
<dbReference type="PROSITE" id="PS00789">
    <property type="entry name" value="CHORISMATE_SYNTHASE_3"/>
    <property type="match status" value="1"/>
</dbReference>
<comment type="function">
    <text evidence="1">Catalyzes the anti-1,4-elimination of the C-3 phosphate and the C-6 proR hydrogen from 5-enolpyruvylshikimate-3-phosphate (EPSP) to yield chorismate, which is the branch point compound that serves as the starting substrate for the three terminal pathways of aromatic amino acid biosynthesis. This reaction introduces a second double bond into the aromatic ring system.</text>
</comment>
<comment type="catalytic activity">
    <reaction evidence="1">
        <text>5-O-(1-carboxyvinyl)-3-phosphoshikimate = chorismate + phosphate</text>
        <dbReference type="Rhea" id="RHEA:21020"/>
        <dbReference type="ChEBI" id="CHEBI:29748"/>
        <dbReference type="ChEBI" id="CHEBI:43474"/>
        <dbReference type="ChEBI" id="CHEBI:57701"/>
        <dbReference type="EC" id="4.2.3.5"/>
    </reaction>
</comment>
<comment type="cofactor">
    <cofactor evidence="1">
        <name>FMNH2</name>
        <dbReference type="ChEBI" id="CHEBI:57618"/>
    </cofactor>
    <text evidence="1">Reduced FMN (FMNH(2)).</text>
</comment>
<comment type="pathway">
    <text evidence="1">Metabolic intermediate biosynthesis; chorismate biosynthesis; chorismate from D-erythrose 4-phosphate and phosphoenolpyruvate: step 7/7.</text>
</comment>
<comment type="subunit">
    <text evidence="1">Homotetramer.</text>
</comment>
<comment type="similarity">
    <text evidence="1">Belongs to the chorismate synthase family.</text>
</comment>
<comment type="sequence caution" evidence="2">
    <conflict type="erroneous initiation">
        <sequence resource="EMBL-CDS" id="ABK53081"/>
    </conflict>
    <text>Extended N-terminus.</text>
</comment>
<accession>A0LUH1</accession>